<name>RLMC_HAEIE</name>
<proteinExistence type="inferred from homology"/>
<dbReference type="EC" id="2.1.1.189" evidence="1"/>
<dbReference type="EMBL" id="CP000671">
    <property type="protein sequence ID" value="ABQ98761.1"/>
    <property type="molecule type" value="Genomic_DNA"/>
</dbReference>
<dbReference type="SMR" id="A5UDB0"/>
<dbReference type="KEGG" id="hip:CGSHiEE_07170"/>
<dbReference type="HOGENOM" id="CLU_014689_0_0_6"/>
<dbReference type="GO" id="GO:0051539">
    <property type="term" value="F:4 iron, 4 sulfur cluster binding"/>
    <property type="evidence" value="ECO:0007669"/>
    <property type="project" value="UniProtKB-KW"/>
</dbReference>
<dbReference type="GO" id="GO:0005506">
    <property type="term" value="F:iron ion binding"/>
    <property type="evidence" value="ECO:0007669"/>
    <property type="project" value="UniProtKB-UniRule"/>
</dbReference>
<dbReference type="GO" id="GO:0070041">
    <property type="term" value="F:rRNA (uridine-C5-)-methyltransferase activity"/>
    <property type="evidence" value="ECO:0007669"/>
    <property type="project" value="UniProtKB-UniRule"/>
</dbReference>
<dbReference type="GO" id="GO:0070475">
    <property type="term" value="P:rRNA base methylation"/>
    <property type="evidence" value="ECO:0007669"/>
    <property type="project" value="TreeGrafter"/>
</dbReference>
<dbReference type="CDD" id="cd02440">
    <property type="entry name" value="AdoMet_MTases"/>
    <property type="match status" value="1"/>
</dbReference>
<dbReference type="FunFam" id="2.40.50.1070:FF:000002">
    <property type="entry name" value="23S rRNA (uracil(747)-C(5))-methyltransferase RlmC"/>
    <property type="match status" value="1"/>
</dbReference>
<dbReference type="Gene3D" id="2.40.50.1070">
    <property type="match status" value="1"/>
</dbReference>
<dbReference type="Gene3D" id="3.40.50.150">
    <property type="entry name" value="Vaccinia Virus protein VP39"/>
    <property type="match status" value="1"/>
</dbReference>
<dbReference type="HAMAP" id="MF_01012">
    <property type="entry name" value="23SrRNA_methyltr_RlmC"/>
    <property type="match status" value="1"/>
</dbReference>
<dbReference type="InterPro" id="IPR011825">
    <property type="entry name" value="23SrRNA_MeTrfase_RlmC"/>
</dbReference>
<dbReference type="InterPro" id="IPR030390">
    <property type="entry name" value="MeTrfase_TrmA_AS"/>
</dbReference>
<dbReference type="InterPro" id="IPR030391">
    <property type="entry name" value="MeTrfase_TrmA_CS"/>
</dbReference>
<dbReference type="InterPro" id="IPR029063">
    <property type="entry name" value="SAM-dependent_MTases_sf"/>
</dbReference>
<dbReference type="InterPro" id="IPR010280">
    <property type="entry name" value="U5_MeTrfase_fam"/>
</dbReference>
<dbReference type="NCBIfam" id="TIGR02085">
    <property type="entry name" value="meth_trns_rumB"/>
    <property type="match status" value="1"/>
</dbReference>
<dbReference type="PANTHER" id="PTHR11061">
    <property type="entry name" value="RNA M5U METHYLTRANSFERASE"/>
    <property type="match status" value="1"/>
</dbReference>
<dbReference type="PANTHER" id="PTHR11061:SF30">
    <property type="entry name" value="TRNA (URACIL(54)-C(5))-METHYLTRANSFERASE"/>
    <property type="match status" value="1"/>
</dbReference>
<dbReference type="Pfam" id="PF05958">
    <property type="entry name" value="tRNA_U5-meth_tr"/>
    <property type="match status" value="1"/>
</dbReference>
<dbReference type="SUPFAM" id="SSF53335">
    <property type="entry name" value="S-adenosyl-L-methionine-dependent methyltransferases"/>
    <property type="match status" value="1"/>
</dbReference>
<dbReference type="PROSITE" id="PS51687">
    <property type="entry name" value="SAM_MT_RNA_M5U"/>
    <property type="match status" value="1"/>
</dbReference>
<dbReference type="PROSITE" id="PS01230">
    <property type="entry name" value="TRMA_1"/>
    <property type="match status" value="1"/>
</dbReference>
<dbReference type="PROSITE" id="PS01231">
    <property type="entry name" value="TRMA_2"/>
    <property type="match status" value="1"/>
</dbReference>
<accession>A5UDB0</accession>
<evidence type="ECO:0000255" key="1">
    <source>
        <dbReference type="HAMAP-Rule" id="MF_01012"/>
    </source>
</evidence>
<sequence length="392" mass="44621">MIDCQYYQQNECRSCQWLEIPYDQQIAEKQHHLKQQLISLDCSDVHWLAPFKSNEQGFRNKAKMLVSGSVERPILGILKNPNDPQSAIDLCDCPLYPAHFSIIFSILKDFIGRAGLVPYNIAKQKGELKYILLTESIATGKLMLRFVLRTENKLPLIRRELPKLLEKLPHLEVISINLQPQHAAILEGEQEIFLTEQQFLPENFNGIPLFIRPQGFFQTNPKVAAGLYATAQQWVAEFPIYNLWDLFCGVGGFGLHCAKALQEKWGKPIKLTGIEISSSAILAASHSAKILGLEHVNFQSLNAASVMENKNENKPDLVIVNPPRRGIGKQLSEFLNQIQPHFILYSSCNAMTMGKDLQHLTCYKPLKIQLFDMFPQTSHYEVLVLLERKKIN</sequence>
<feature type="chain" id="PRO_1000063002" description="23S rRNA (uracil(747)-C(5))-methyltransferase RlmC">
    <location>
        <begin position="1"/>
        <end position="392"/>
    </location>
</feature>
<feature type="active site" description="Nucleophile" evidence="1">
    <location>
        <position position="348"/>
    </location>
</feature>
<feature type="binding site" evidence="1">
    <location>
        <position position="4"/>
    </location>
    <ligand>
        <name>[4Fe-4S] cluster</name>
        <dbReference type="ChEBI" id="CHEBI:49883"/>
    </ligand>
</feature>
<feature type="binding site" evidence="1">
    <location>
        <position position="12"/>
    </location>
    <ligand>
        <name>[4Fe-4S] cluster</name>
        <dbReference type="ChEBI" id="CHEBI:49883"/>
    </ligand>
</feature>
<feature type="binding site" evidence="1">
    <location>
        <position position="15"/>
    </location>
    <ligand>
        <name>[4Fe-4S] cluster</name>
        <dbReference type="ChEBI" id="CHEBI:49883"/>
    </ligand>
</feature>
<feature type="binding site" evidence="1">
    <location>
        <position position="93"/>
    </location>
    <ligand>
        <name>[4Fe-4S] cluster</name>
        <dbReference type="ChEBI" id="CHEBI:49883"/>
    </ligand>
</feature>
<feature type="binding site" evidence="1">
    <location>
        <position position="218"/>
    </location>
    <ligand>
        <name>S-adenosyl-L-methionine</name>
        <dbReference type="ChEBI" id="CHEBI:59789"/>
    </ligand>
</feature>
<feature type="binding site" evidence="1">
    <location>
        <position position="247"/>
    </location>
    <ligand>
        <name>S-adenosyl-L-methionine</name>
        <dbReference type="ChEBI" id="CHEBI:59789"/>
    </ligand>
</feature>
<feature type="binding site" evidence="1">
    <location>
        <position position="275"/>
    </location>
    <ligand>
        <name>S-adenosyl-L-methionine</name>
        <dbReference type="ChEBI" id="CHEBI:59789"/>
    </ligand>
</feature>
<feature type="binding site" evidence="1">
    <location>
        <position position="321"/>
    </location>
    <ligand>
        <name>S-adenosyl-L-methionine</name>
        <dbReference type="ChEBI" id="CHEBI:59789"/>
    </ligand>
</feature>
<gene>
    <name evidence="1" type="primary">rlmC</name>
    <name type="synonym">rumB</name>
    <name type="ordered locus">CGSHiEE_07170</name>
</gene>
<keyword id="KW-0004">4Fe-4S</keyword>
<keyword id="KW-0408">Iron</keyword>
<keyword id="KW-0411">Iron-sulfur</keyword>
<keyword id="KW-0479">Metal-binding</keyword>
<keyword id="KW-0489">Methyltransferase</keyword>
<keyword id="KW-0698">rRNA processing</keyword>
<keyword id="KW-0949">S-adenosyl-L-methionine</keyword>
<keyword id="KW-0808">Transferase</keyword>
<organism>
    <name type="scientific">Haemophilus influenzae (strain PittEE)</name>
    <dbReference type="NCBI Taxonomy" id="374930"/>
    <lineage>
        <taxon>Bacteria</taxon>
        <taxon>Pseudomonadati</taxon>
        <taxon>Pseudomonadota</taxon>
        <taxon>Gammaproteobacteria</taxon>
        <taxon>Pasteurellales</taxon>
        <taxon>Pasteurellaceae</taxon>
        <taxon>Haemophilus</taxon>
    </lineage>
</organism>
<protein>
    <recommendedName>
        <fullName evidence="1">23S rRNA (uracil(747)-C(5))-methyltransferase RlmC</fullName>
        <ecNumber evidence="1">2.1.1.189</ecNumber>
    </recommendedName>
    <alternativeName>
        <fullName evidence="1">23S rRNA(m5U747)-methyltransferase</fullName>
    </alternativeName>
</protein>
<comment type="function">
    <text evidence="1">Catalyzes the formation of 5-methyl-uridine at position 747 (m5U747) in 23S rRNA.</text>
</comment>
<comment type="catalytic activity">
    <reaction evidence="1">
        <text>uridine(747) in 23S rRNA + S-adenosyl-L-methionine = 5-methyluridine(747) in 23S rRNA + S-adenosyl-L-homocysteine + H(+)</text>
        <dbReference type="Rhea" id="RHEA:42628"/>
        <dbReference type="Rhea" id="RHEA-COMP:10154"/>
        <dbReference type="Rhea" id="RHEA-COMP:10155"/>
        <dbReference type="ChEBI" id="CHEBI:15378"/>
        <dbReference type="ChEBI" id="CHEBI:57856"/>
        <dbReference type="ChEBI" id="CHEBI:59789"/>
        <dbReference type="ChEBI" id="CHEBI:65315"/>
        <dbReference type="ChEBI" id="CHEBI:74447"/>
        <dbReference type="EC" id="2.1.1.189"/>
    </reaction>
</comment>
<comment type="similarity">
    <text evidence="1">Belongs to the class I-like SAM-binding methyltransferase superfamily. RNA M5U methyltransferase family. RlmC subfamily.</text>
</comment>
<reference key="1">
    <citation type="journal article" date="2007" name="Genome Biol.">
        <title>Characterization and modeling of the Haemophilus influenzae core and supragenomes based on the complete genomic sequences of Rd and 12 clinical nontypeable strains.</title>
        <authorList>
            <person name="Hogg J.S."/>
            <person name="Hu F.Z."/>
            <person name="Janto B."/>
            <person name="Boissy R."/>
            <person name="Hayes J."/>
            <person name="Keefe R."/>
            <person name="Post J.C."/>
            <person name="Ehrlich G.D."/>
        </authorList>
    </citation>
    <scope>NUCLEOTIDE SEQUENCE [LARGE SCALE GENOMIC DNA]</scope>
    <source>
        <strain>PittEE</strain>
    </source>
</reference>